<proteinExistence type="evidence at protein level"/>
<keyword id="KW-0001">2Fe-2S</keyword>
<keyword id="KW-0150">Chloroplast</keyword>
<keyword id="KW-0903">Direct protein sequencing</keyword>
<keyword id="KW-0249">Electron transport</keyword>
<keyword id="KW-0408">Iron</keyword>
<keyword id="KW-0411">Iron-sulfur</keyword>
<keyword id="KW-0479">Metal-binding</keyword>
<keyword id="KW-0934">Plastid</keyword>
<keyword id="KW-0813">Transport</keyword>
<dbReference type="PIR" id="A00233">
    <property type="entry name" value="FEED"/>
</dbReference>
<dbReference type="SMR" id="P00226"/>
<dbReference type="GO" id="GO:0009570">
    <property type="term" value="C:chloroplast stroma"/>
    <property type="evidence" value="ECO:0007669"/>
    <property type="project" value="TreeGrafter"/>
</dbReference>
<dbReference type="GO" id="GO:0051537">
    <property type="term" value="F:2 iron, 2 sulfur cluster binding"/>
    <property type="evidence" value="ECO:0007669"/>
    <property type="project" value="UniProtKB-KW"/>
</dbReference>
<dbReference type="GO" id="GO:0009055">
    <property type="term" value="F:electron transfer activity"/>
    <property type="evidence" value="ECO:0007669"/>
    <property type="project" value="InterPro"/>
</dbReference>
<dbReference type="GO" id="GO:0046872">
    <property type="term" value="F:metal ion binding"/>
    <property type="evidence" value="ECO:0007669"/>
    <property type="project" value="UniProtKB-KW"/>
</dbReference>
<dbReference type="GO" id="GO:0022900">
    <property type="term" value="P:electron transport chain"/>
    <property type="evidence" value="ECO:0007669"/>
    <property type="project" value="InterPro"/>
</dbReference>
<dbReference type="GO" id="GO:0006124">
    <property type="term" value="P:ferredoxin metabolic process"/>
    <property type="evidence" value="ECO:0007669"/>
    <property type="project" value="UniProtKB-ARBA"/>
</dbReference>
<dbReference type="CDD" id="cd00207">
    <property type="entry name" value="fer2"/>
    <property type="match status" value="1"/>
</dbReference>
<dbReference type="FunFam" id="3.10.20.30:FF:000014">
    <property type="entry name" value="Ferredoxin"/>
    <property type="match status" value="1"/>
</dbReference>
<dbReference type="Gene3D" id="3.10.20.30">
    <property type="match status" value="1"/>
</dbReference>
<dbReference type="InterPro" id="IPR036010">
    <property type="entry name" value="2Fe-2S_ferredoxin-like_sf"/>
</dbReference>
<dbReference type="InterPro" id="IPR001041">
    <property type="entry name" value="2Fe-2S_ferredoxin-type"/>
</dbReference>
<dbReference type="InterPro" id="IPR006058">
    <property type="entry name" value="2Fe2S_fd_BS"/>
</dbReference>
<dbReference type="InterPro" id="IPR012675">
    <property type="entry name" value="Beta-grasp_dom_sf"/>
</dbReference>
<dbReference type="InterPro" id="IPR010241">
    <property type="entry name" value="Fd_pln"/>
</dbReference>
<dbReference type="NCBIfam" id="TIGR02008">
    <property type="entry name" value="fdx_plant"/>
    <property type="match status" value="1"/>
</dbReference>
<dbReference type="PANTHER" id="PTHR43112">
    <property type="entry name" value="FERREDOXIN"/>
    <property type="match status" value="1"/>
</dbReference>
<dbReference type="PANTHER" id="PTHR43112:SF3">
    <property type="entry name" value="FERREDOXIN-2, CHLOROPLASTIC"/>
    <property type="match status" value="1"/>
</dbReference>
<dbReference type="Pfam" id="PF00111">
    <property type="entry name" value="Fer2"/>
    <property type="match status" value="1"/>
</dbReference>
<dbReference type="SUPFAM" id="SSF54292">
    <property type="entry name" value="2Fe-2S ferredoxin-like"/>
    <property type="match status" value="1"/>
</dbReference>
<dbReference type="PROSITE" id="PS00197">
    <property type="entry name" value="2FE2S_FER_1"/>
    <property type="match status" value="1"/>
</dbReference>
<dbReference type="PROSITE" id="PS51085">
    <property type="entry name" value="2FE2S_FER_2"/>
    <property type="match status" value="1"/>
</dbReference>
<protein>
    <recommendedName>
        <fullName>Ferredoxin</fullName>
    </recommendedName>
</protein>
<feature type="chain" id="PRO_0000189362" description="Ferredoxin">
    <location>
        <begin position="1"/>
        <end position="97"/>
    </location>
</feature>
<feature type="domain" description="2Fe-2S ferredoxin-type" evidence="1">
    <location>
        <begin position="3"/>
        <end position="93"/>
    </location>
</feature>
<feature type="binding site" evidence="1">
    <location>
        <position position="39"/>
    </location>
    <ligand>
        <name>[2Fe-2S] cluster</name>
        <dbReference type="ChEBI" id="CHEBI:190135"/>
    </ligand>
</feature>
<feature type="binding site" evidence="1">
    <location>
        <position position="44"/>
    </location>
    <ligand>
        <name>[2Fe-2S] cluster</name>
        <dbReference type="ChEBI" id="CHEBI:190135"/>
    </ligand>
</feature>
<feature type="binding site" evidence="1">
    <location>
        <position position="47"/>
    </location>
    <ligand>
        <name>[2Fe-2S] cluster</name>
        <dbReference type="ChEBI" id="CHEBI:190135"/>
    </ligand>
</feature>
<feature type="binding site" evidence="1">
    <location>
        <position position="77"/>
    </location>
    <ligand>
        <name>[2Fe-2S] cluster</name>
        <dbReference type="ChEBI" id="CHEBI:190135"/>
    </ligand>
</feature>
<accession>P00226</accession>
<sequence>ASYKVKLITPDGPQEFECPDDVYILEHAEELGIDIPYSCRAGSCSSCAGKLVAGSVDQSDQSFLDDEQIEEGWVLTCVAYPKSDVTIETHKEEELTA</sequence>
<reference key="1">
    <citation type="journal article" date="1979" name="Phytochemistry">
        <title>The amino acid sequence of ferredoxin from Sambucus nigra.</title>
        <authorList>
            <person name="Takruri I.A.H."/>
            <person name="Boulter D."/>
        </authorList>
    </citation>
    <scope>PROTEIN SEQUENCE</scope>
</reference>
<name>FER_SAMNI</name>
<evidence type="ECO:0000255" key="1">
    <source>
        <dbReference type="PROSITE-ProRule" id="PRU00465"/>
    </source>
</evidence>
<evidence type="ECO:0000305" key="2"/>
<comment type="function">
    <text>Ferredoxins are iron-sulfur proteins that transfer electrons in a wide variety of metabolic reactions.</text>
</comment>
<comment type="cofactor">
    <cofactor>
        <name>[2Fe-2S] cluster</name>
        <dbReference type="ChEBI" id="CHEBI:190135"/>
    </cofactor>
    <text>Binds 1 [2Fe-2S] cluster.</text>
</comment>
<comment type="subcellular location">
    <subcellularLocation>
        <location>Plastid</location>
        <location>Chloroplast</location>
    </subcellularLocation>
</comment>
<comment type="similarity">
    <text evidence="2">Belongs to the 2Fe2S plant-type ferredoxin family.</text>
</comment>
<organism>
    <name type="scientific">Sambucus nigra</name>
    <name type="common">European elder</name>
    <dbReference type="NCBI Taxonomy" id="4202"/>
    <lineage>
        <taxon>Eukaryota</taxon>
        <taxon>Viridiplantae</taxon>
        <taxon>Streptophyta</taxon>
        <taxon>Embryophyta</taxon>
        <taxon>Tracheophyta</taxon>
        <taxon>Spermatophyta</taxon>
        <taxon>Magnoliopsida</taxon>
        <taxon>eudicotyledons</taxon>
        <taxon>Gunneridae</taxon>
        <taxon>Pentapetalae</taxon>
        <taxon>asterids</taxon>
        <taxon>campanulids</taxon>
        <taxon>Dipsacales</taxon>
        <taxon>Adoxaceae</taxon>
        <taxon>Sambucus</taxon>
    </lineage>
</organism>